<dbReference type="EMBL" id="GL988039">
    <property type="protein sequence ID" value="EGS22590.1"/>
    <property type="molecule type" value="Genomic_DNA"/>
</dbReference>
<dbReference type="RefSeq" id="XP_006691582.1">
    <property type="nucleotide sequence ID" value="XM_006691519.1"/>
</dbReference>
<dbReference type="PDB" id="6CFZ">
    <property type="method" value="EM"/>
    <property type="resolution" value="4.50 A"/>
    <property type="chains" value="I=7-156"/>
</dbReference>
<dbReference type="PDBsum" id="6CFZ"/>
<dbReference type="EMDB" id="EMD-7469"/>
<dbReference type="SMR" id="G0S0N0"/>
<dbReference type="IntAct" id="G0S0N0">
    <property type="interactions" value="1"/>
</dbReference>
<dbReference type="STRING" id="759272.G0S0N0"/>
<dbReference type="GeneID" id="18255098"/>
<dbReference type="KEGG" id="cthr:CTHT_0010600"/>
<dbReference type="eggNOG" id="ENOG502SDEQ">
    <property type="taxonomic scope" value="Eukaryota"/>
</dbReference>
<dbReference type="HOGENOM" id="CLU_112993_0_0_1"/>
<dbReference type="OMA" id="DCCEEAH"/>
<dbReference type="OrthoDB" id="3361333at2759"/>
<dbReference type="Proteomes" id="UP000008066">
    <property type="component" value="Unassembled WGS sequence"/>
</dbReference>
<dbReference type="GO" id="GO:0005737">
    <property type="term" value="C:cytoplasm"/>
    <property type="evidence" value="ECO:0007669"/>
    <property type="project" value="UniProtKB-KW"/>
</dbReference>
<dbReference type="GO" id="GO:0042729">
    <property type="term" value="C:DASH complex"/>
    <property type="evidence" value="ECO:0000314"/>
    <property type="project" value="UniProtKB"/>
</dbReference>
<dbReference type="GO" id="GO:0000776">
    <property type="term" value="C:kinetochore"/>
    <property type="evidence" value="ECO:0000305"/>
    <property type="project" value="UniProtKB"/>
</dbReference>
<dbReference type="GO" id="GO:0072686">
    <property type="term" value="C:mitotic spindle"/>
    <property type="evidence" value="ECO:0000305"/>
    <property type="project" value="UniProtKB"/>
</dbReference>
<dbReference type="GO" id="GO:0005876">
    <property type="term" value="C:spindle microtubule"/>
    <property type="evidence" value="ECO:0007669"/>
    <property type="project" value="InterPro"/>
</dbReference>
<dbReference type="GO" id="GO:0051315">
    <property type="term" value="P:attachment of mitotic spindle microtubules to kinetochore"/>
    <property type="evidence" value="ECO:0000305"/>
    <property type="project" value="UniProtKB"/>
</dbReference>
<dbReference type="GO" id="GO:0008608">
    <property type="term" value="P:attachment of spindle microtubules to kinetochore"/>
    <property type="evidence" value="ECO:0000250"/>
    <property type="project" value="UniProtKB"/>
</dbReference>
<dbReference type="GO" id="GO:1990758">
    <property type="term" value="P:mitotic sister chromatid biorientation"/>
    <property type="evidence" value="ECO:0000250"/>
    <property type="project" value="UniProtKB"/>
</dbReference>
<dbReference type="GO" id="GO:1990976">
    <property type="term" value="P:protein transport along microtubule to mitotic spindle pole body"/>
    <property type="evidence" value="ECO:0000250"/>
    <property type="project" value="UniProtKB"/>
</dbReference>
<dbReference type="InterPro" id="IPR013251">
    <property type="entry name" value="DASH_Spc19"/>
</dbReference>
<dbReference type="PANTHER" id="PTHR28262">
    <property type="entry name" value="DASH COMPLEX SUBUNIT SPC19"/>
    <property type="match status" value="1"/>
</dbReference>
<dbReference type="PANTHER" id="PTHR28262:SF1">
    <property type="entry name" value="DASH COMPLEX SUBUNIT SPC19"/>
    <property type="match status" value="1"/>
</dbReference>
<dbReference type="Pfam" id="PF08287">
    <property type="entry name" value="DASH_Spc19"/>
    <property type="match status" value="1"/>
</dbReference>
<name>SPC19_CHATD</name>
<gene>
    <name evidence="4" type="primary">SPC19</name>
    <name evidence="6" type="ORF">CTHT_0010600</name>
</gene>
<feature type="chain" id="PRO_0000459464" description="DASH complex subunit SPC19">
    <location>
        <begin position="1"/>
        <end position="173"/>
    </location>
</feature>
<accession>G0S0N0</accession>
<organism evidence="7">
    <name type="scientific">Chaetomium thermophilum (strain DSM 1495 / CBS 144.50 / IMI 039719)</name>
    <name type="common">Thermochaetoides thermophila</name>
    <dbReference type="NCBI Taxonomy" id="759272"/>
    <lineage>
        <taxon>Eukaryota</taxon>
        <taxon>Fungi</taxon>
        <taxon>Dikarya</taxon>
        <taxon>Ascomycota</taxon>
        <taxon>Pezizomycotina</taxon>
        <taxon>Sordariomycetes</taxon>
        <taxon>Sordariomycetidae</taxon>
        <taxon>Sordariales</taxon>
        <taxon>Chaetomiaceae</taxon>
        <taxon>Thermochaetoides</taxon>
    </lineage>
</organism>
<keyword id="KW-0002">3D-structure</keyword>
<keyword id="KW-0137">Centromere</keyword>
<keyword id="KW-0158">Chromosome</keyword>
<keyword id="KW-0963">Cytoplasm</keyword>
<keyword id="KW-0206">Cytoskeleton</keyword>
<keyword id="KW-0995">Kinetochore</keyword>
<keyword id="KW-0539">Nucleus</keyword>
<keyword id="KW-1185">Reference proteome</keyword>
<sequence>MSRQSPSYADCVCSLRTSLAFLESSVATLDNGVQDFPRLCHVLRTVRHYELIPQTTLAAAEASLRDEIGPFIQLLLDRAEKHLDRQARRIETLKARAELNAGRLSQYSGDGHNNGKFSGQGMDFRKSRPLNGEAALRAKVVRQRKEALKYSVERLEMEVRQKERELKLRLEQA</sequence>
<reference evidence="7" key="1">
    <citation type="journal article" date="2011" name="Cell">
        <title>Insight into structure and assembly of the nuclear pore complex by utilizing the genome of a eukaryotic thermophile.</title>
        <authorList>
            <person name="Amlacher S."/>
            <person name="Sarges P."/>
            <person name="Flemming D."/>
            <person name="van Noort V."/>
            <person name="Kunze R."/>
            <person name="Devos D.P."/>
            <person name="Arumugam M."/>
            <person name="Bork P."/>
            <person name="Hurt E."/>
        </authorList>
    </citation>
    <scope>NUCLEOTIDE SEQUENCE [LARGE SCALE GENOMIC DNA]</scope>
    <source>
        <strain evidence="7">DSM 1495 / CBS 144.50 / IMI 039719</strain>
    </source>
</reference>
<reference evidence="8" key="2">
    <citation type="journal article" date="2018" name="Science">
        <title>Structure of the DASH/Dam1 complex shows its role at the yeast kinetochore-microtubule interface.</title>
        <authorList>
            <person name="Jenni S."/>
            <person name="Harrison S.C."/>
        </authorList>
    </citation>
    <scope>STRUCTURE BY ELECTRON MICROSCOPY (4.50 ANGSTROMS) OF 7-156</scope>
    <scope>IDENTIFICATION IN THE DASH COMPLEX</scope>
</reference>
<proteinExistence type="evidence at protein level"/>
<comment type="function">
    <text evidence="1">Component of the DASH complex that connects microtubules with kinetochores and couples microtubule depolymerisation to chromosome movement; it is involved in retrieving kinetochores to the spindle poles before their re-orientation on the spindle in early mitosis and allows microtubule depolymerization to pull chromosomes apart and resist detachment during anaphase. Kinetochores, consisting of a centromere-associated inner segment and a microtubule-contacting outer segment, play a crucial role in chromosome segregation by mediating the physical connection between centromeric DNA and microtubules. Kinetochores also serve as an input point for the spindle assembly checkpoint, which delays anaphase until all chromosomes have bioriented on the mitotic spindle.</text>
</comment>
<comment type="subunit">
    <text evidence="1 2 3">Component of the DASH complex consisting of ASK1, DAD1, DAD2, DAD3, DAD4, DAM1, DUO1, HSK3, SPC19 and SPC34, with a stoichiometry of one copy of each subunit per complex (PubMed:29724956). Multiple DASH complexes oligomerize to form a ring that encircles spindle microtubules and organizes the rod-like NDC80 complexes of the outer kinetochore (PubMed:29724956). DASH complex oligomerization strengthens microtubule attachments (By similarity). On cytoplasmic microtubules, DASH complexes appear to form patches instead of rings (By similarity).</text>
</comment>
<comment type="subcellular location">
    <subcellularLocation>
        <location evidence="1">Nucleus</location>
    </subcellularLocation>
    <subcellularLocation>
        <location evidence="1">Cytoplasm</location>
        <location evidence="1">Cytoskeleton</location>
        <location evidence="1">Spindle</location>
    </subcellularLocation>
    <subcellularLocation>
        <location evidence="1">Chromosome</location>
        <location evidence="1">Centromere</location>
        <location evidence="1">Kinetochore</location>
    </subcellularLocation>
</comment>
<comment type="similarity">
    <text evidence="5">Belongs to the DASH complex SPC19 family.</text>
</comment>
<evidence type="ECO:0000250" key="1">
    <source>
        <dbReference type="UniProtKB" id="Q03954"/>
    </source>
</evidence>
<evidence type="ECO:0000250" key="2">
    <source>
        <dbReference type="UniProtKB" id="Q50HP3"/>
    </source>
</evidence>
<evidence type="ECO:0000269" key="3">
    <source>
    </source>
</evidence>
<evidence type="ECO:0000303" key="4">
    <source>
    </source>
</evidence>
<evidence type="ECO:0000305" key="5"/>
<evidence type="ECO:0000312" key="6">
    <source>
        <dbReference type="EMBL" id="EGS22590.1"/>
    </source>
</evidence>
<evidence type="ECO:0000312" key="7">
    <source>
        <dbReference type="Proteomes" id="UP000008066"/>
    </source>
</evidence>
<evidence type="ECO:0007744" key="8">
    <source>
        <dbReference type="PDB" id="6CFZ"/>
    </source>
</evidence>
<protein>
    <recommendedName>
        <fullName evidence="4">DASH complex subunit SPC19</fullName>
    </recommendedName>
    <alternativeName>
        <fullName evidence="1">Outer kinetochore protein SPC19</fullName>
    </alternativeName>
</protein>